<evidence type="ECO:0000255" key="1">
    <source>
        <dbReference type="HAMAP-Rule" id="MF_00270"/>
    </source>
</evidence>
<evidence type="ECO:0000305" key="2"/>
<accession>B3PCS1</accession>
<dbReference type="EMBL" id="CP000934">
    <property type="protein sequence ID" value="ACE86240.1"/>
    <property type="molecule type" value="Genomic_DNA"/>
</dbReference>
<dbReference type="RefSeq" id="WP_012488562.1">
    <property type="nucleotide sequence ID" value="NC_010995.1"/>
</dbReference>
<dbReference type="SMR" id="B3PCS1"/>
<dbReference type="STRING" id="498211.CJA_2981"/>
<dbReference type="KEGG" id="cja:CJA_2981"/>
<dbReference type="eggNOG" id="COG0238">
    <property type="taxonomic scope" value="Bacteria"/>
</dbReference>
<dbReference type="HOGENOM" id="CLU_148710_2_3_6"/>
<dbReference type="OrthoDB" id="9812008at2"/>
<dbReference type="Proteomes" id="UP000001036">
    <property type="component" value="Chromosome"/>
</dbReference>
<dbReference type="GO" id="GO:0022627">
    <property type="term" value="C:cytosolic small ribosomal subunit"/>
    <property type="evidence" value="ECO:0007669"/>
    <property type="project" value="TreeGrafter"/>
</dbReference>
<dbReference type="GO" id="GO:0070181">
    <property type="term" value="F:small ribosomal subunit rRNA binding"/>
    <property type="evidence" value="ECO:0007669"/>
    <property type="project" value="TreeGrafter"/>
</dbReference>
<dbReference type="GO" id="GO:0003735">
    <property type="term" value="F:structural constituent of ribosome"/>
    <property type="evidence" value="ECO:0007669"/>
    <property type="project" value="InterPro"/>
</dbReference>
<dbReference type="GO" id="GO:0006412">
    <property type="term" value="P:translation"/>
    <property type="evidence" value="ECO:0007669"/>
    <property type="project" value="UniProtKB-UniRule"/>
</dbReference>
<dbReference type="FunFam" id="4.10.640.10:FF:000001">
    <property type="entry name" value="30S ribosomal protein S18"/>
    <property type="match status" value="1"/>
</dbReference>
<dbReference type="Gene3D" id="4.10.640.10">
    <property type="entry name" value="Ribosomal protein S18"/>
    <property type="match status" value="1"/>
</dbReference>
<dbReference type="HAMAP" id="MF_00270">
    <property type="entry name" value="Ribosomal_bS18"/>
    <property type="match status" value="1"/>
</dbReference>
<dbReference type="InterPro" id="IPR001648">
    <property type="entry name" value="Ribosomal_bS18"/>
</dbReference>
<dbReference type="InterPro" id="IPR018275">
    <property type="entry name" value="Ribosomal_bS18_CS"/>
</dbReference>
<dbReference type="InterPro" id="IPR036870">
    <property type="entry name" value="Ribosomal_bS18_sf"/>
</dbReference>
<dbReference type="NCBIfam" id="TIGR00165">
    <property type="entry name" value="S18"/>
    <property type="match status" value="1"/>
</dbReference>
<dbReference type="PANTHER" id="PTHR13479">
    <property type="entry name" value="30S RIBOSOMAL PROTEIN S18"/>
    <property type="match status" value="1"/>
</dbReference>
<dbReference type="PANTHER" id="PTHR13479:SF40">
    <property type="entry name" value="SMALL RIBOSOMAL SUBUNIT PROTEIN BS18M"/>
    <property type="match status" value="1"/>
</dbReference>
<dbReference type="Pfam" id="PF01084">
    <property type="entry name" value="Ribosomal_S18"/>
    <property type="match status" value="1"/>
</dbReference>
<dbReference type="PRINTS" id="PR00974">
    <property type="entry name" value="RIBOSOMALS18"/>
</dbReference>
<dbReference type="SUPFAM" id="SSF46911">
    <property type="entry name" value="Ribosomal protein S18"/>
    <property type="match status" value="1"/>
</dbReference>
<dbReference type="PROSITE" id="PS00057">
    <property type="entry name" value="RIBOSOMAL_S18"/>
    <property type="match status" value="1"/>
</dbReference>
<keyword id="KW-1185">Reference proteome</keyword>
<keyword id="KW-0687">Ribonucleoprotein</keyword>
<keyword id="KW-0689">Ribosomal protein</keyword>
<keyword id="KW-0694">RNA-binding</keyword>
<keyword id="KW-0699">rRNA-binding</keyword>
<comment type="function">
    <text evidence="1">Binds as a heterodimer with protein bS6 to the central domain of the 16S rRNA, where it helps stabilize the platform of the 30S subunit.</text>
</comment>
<comment type="subunit">
    <text evidence="1">Part of the 30S ribosomal subunit. Forms a tight heterodimer with protein bS6.</text>
</comment>
<comment type="similarity">
    <text evidence="1">Belongs to the bacterial ribosomal protein bS18 family.</text>
</comment>
<feature type="chain" id="PRO_1000114409" description="Small ribosomal subunit protein bS18">
    <location>
        <begin position="1"/>
        <end position="75"/>
    </location>
</feature>
<organism>
    <name type="scientific">Cellvibrio japonicus (strain Ueda107)</name>
    <name type="common">Pseudomonas fluorescens subsp. cellulosa</name>
    <dbReference type="NCBI Taxonomy" id="498211"/>
    <lineage>
        <taxon>Bacteria</taxon>
        <taxon>Pseudomonadati</taxon>
        <taxon>Pseudomonadota</taxon>
        <taxon>Gammaproteobacteria</taxon>
        <taxon>Cellvibrionales</taxon>
        <taxon>Cellvibrionaceae</taxon>
        <taxon>Cellvibrio</taxon>
    </lineage>
</organism>
<protein>
    <recommendedName>
        <fullName evidence="1">Small ribosomal subunit protein bS18</fullName>
    </recommendedName>
    <alternativeName>
        <fullName evidence="2">30S ribosomal protein S18</fullName>
    </alternativeName>
</protein>
<proteinExistence type="inferred from homology"/>
<sequence length="75" mass="8861">MARFFRRRKFCRFTAEGTKRIDYKDIETLKAYITETGKIVPSRITGTKAKYQRQLATAIKRARYLALIPYTDSHE</sequence>
<name>RS18_CELJU</name>
<gene>
    <name evidence="1" type="primary">rpsR</name>
    <name type="ordered locus">CJA_2981</name>
</gene>
<reference key="1">
    <citation type="journal article" date="2008" name="J. Bacteriol.">
        <title>Insights into plant cell wall degradation from the genome sequence of the soil bacterium Cellvibrio japonicus.</title>
        <authorList>
            <person name="DeBoy R.T."/>
            <person name="Mongodin E.F."/>
            <person name="Fouts D.E."/>
            <person name="Tailford L.E."/>
            <person name="Khouri H."/>
            <person name="Emerson J.B."/>
            <person name="Mohamoud Y."/>
            <person name="Watkins K."/>
            <person name="Henrissat B."/>
            <person name="Gilbert H.J."/>
            <person name="Nelson K.E."/>
        </authorList>
    </citation>
    <scope>NUCLEOTIDE SEQUENCE [LARGE SCALE GENOMIC DNA]</scope>
    <source>
        <strain>Ueda107</strain>
    </source>
</reference>